<proteinExistence type="predicted"/>
<accession>Q9P3B0</accession>
<dbReference type="EMBL" id="CU329670">
    <property type="protein sequence ID" value="CAB99270.1"/>
    <property type="molecule type" value="Genomic_DNA"/>
</dbReference>
<dbReference type="RefSeq" id="NP_593282.1">
    <property type="nucleotide sequence ID" value="NM_001018712.2"/>
</dbReference>
<dbReference type="BioGRID" id="278085">
    <property type="interactions" value="4"/>
</dbReference>
<dbReference type="STRING" id="284812.Q9P3B0"/>
<dbReference type="iPTMnet" id="Q9P3B0"/>
<dbReference type="PaxDb" id="4896-SPAC1565.03.1"/>
<dbReference type="EnsemblFungi" id="SPAC1565.03.1">
    <property type="protein sequence ID" value="SPAC1565.03.1:pep"/>
    <property type="gene ID" value="SPAC1565.03"/>
</dbReference>
<dbReference type="KEGG" id="spo:2541588"/>
<dbReference type="PomBase" id="SPAC1565.03"/>
<dbReference type="VEuPathDB" id="FungiDB:SPAC1565.03"/>
<dbReference type="HOGENOM" id="CLU_1603690_0_0_1"/>
<dbReference type="InParanoid" id="Q9P3B0"/>
<dbReference type="PRO" id="PR:Q9P3B0"/>
<dbReference type="Proteomes" id="UP000002485">
    <property type="component" value="Chromosome I"/>
</dbReference>
<gene>
    <name type="ORF">SPAC1565.03</name>
</gene>
<feature type="chain" id="PRO_0000304054" description="Uncharacterized protein C1565.03">
    <location>
        <begin position="1"/>
        <end position="166"/>
    </location>
</feature>
<reference key="1">
    <citation type="journal article" date="2002" name="Nature">
        <title>The genome sequence of Schizosaccharomyces pombe.</title>
        <authorList>
            <person name="Wood V."/>
            <person name="Gwilliam R."/>
            <person name="Rajandream M.A."/>
            <person name="Lyne M.H."/>
            <person name="Lyne R."/>
            <person name="Stewart A."/>
            <person name="Sgouros J.G."/>
            <person name="Peat N."/>
            <person name="Hayles J."/>
            <person name="Baker S.G."/>
            <person name="Basham D."/>
            <person name="Bowman S."/>
            <person name="Brooks K."/>
            <person name="Brown D."/>
            <person name="Brown S."/>
            <person name="Chillingworth T."/>
            <person name="Churcher C.M."/>
            <person name="Collins M."/>
            <person name="Connor R."/>
            <person name="Cronin A."/>
            <person name="Davis P."/>
            <person name="Feltwell T."/>
            <person name="Fraser A."/>
            <person name="Gentles S."/>
            <person name="Goble A."/>
            <person name="Hamlin N."/>
            <person name="Harris D.E."/>
            <person name="Hidalgo J."/>
            <person name="Hodgson G."/>
            <person name="Holroyd S."/>
            <person name="Hornsby T."/>
            <person name="Howarth S."/>
            <person name="Huckle E.J."/>
            <person name="Hunt S."/>
            <person name="Jagels K."/>
            <person name="James K.D."/>
            <person name="Jones L."/>
            <person name="Jones M."/>
            <person name="Leather S."/>
            <person name="McDonald S."/>
            <person name="McLean J."/>
            <person name="Mooney P."/>
            <person name="Moule S."/>
            <person name="Mungall K.L."/>
            <person name="Murphy L.D."/>
            <person name="Niblett D."/>
            <person name="Odell C."/>
            <person name="Oliver K."/>
            <person name="O'Neil S."/>
            <person name="Pearson D."/>
            <person name="Quail M.A."/>
            <person name="Rabbinowitsch E."/>
            <person name="Rutherford K.M."/>
            <person name="Rutter S."/>
            <person name="Saunders D."/>
            <person name="Seeger K."/>
            <person name="Sharp S."/>
            <person name="Skelton J."/>
            <person name="Simmonds M.N."/>
            <person name="Squares R."/>
            <person name="Squares S."/>
            <person name="Stevens K."/>
            <person name="Taylor K."/>
            <person name="Taylor R.G."/>
            <person name="Tivey A."/>
            <person name="Walsh S.V."/>
            <person name="Warren T."/>
            <person name="Whitehead S."/>
            <person name="Woodward J.R."/>
            <person name="Volckaert G."/>
            <person name="Aert R."/>
            <person name="Robben J."/>
            <person name="Grymonprez B."/>
            <person name="Weltjens I."/>
            <person name="Vanstreels E."/>
            <person name="Rieger M."/>
            <person name="Schaefer M."/>
            <person name="Mueller-Auer S."/>
            <person name="Gabel C."/>
            <person name="Fuchs M."/>
            <person name="Duesterhoeft A."/>
            <person name="Fritzc C."/>
            <person name="Holzer E."/>
            <person name="Moestl D."/>
            <person name="Hilbert H."/>
            <person name="Borzym K."/>
            <person name="Langer I."/>
            <person name="Beck A."/>
            <person name="Lehrach H."/>
            <person name="Reinhardt R."/>
            <person name="Pohl T.M."/>
            <person name="Eger P."/>
            <person name="Zimmermann W."/>
            <person name="Wedler H."/>
            <person name="Wambutt R."/>
            <person name="Purnelle B."/>
            <person name="Goffeau A."/>
            <person name="Cadieu E."/>
            <person name="Dreano S."/>
            <person name="Gloux S."/>
            <person name="Lelaure V."/>
            <person name="Mottier S."/>
            <person name="Galibert F."/>
            <person name="Aves S.J."/>
            <person name="Xiang Z."/>
            <person name="Hunt C."/>
            <person name="Moore K."/>
            <person name="Hurst S.M."/>
            <person name="Lucas M."/>
            <person name="Rochet M."/>
            <person name="Gaillardin C."/>
            <person name="Tallada V.A."/>
            <person name="Garzon A."/>
            <person name="Thode G."/>
            <person name="Daga R.R."/>
            <person name="Cruzado L."/>
            <person name="Jimenez J."/>
            <person name="Sanchez M."/>
            <person name="del Rey F."/>
            <person name="Benito J."/>
            <person name="Dominguez A."/>
            <person name="Revuelta J.L."/>
            <person name="Moreno S."/>
            <person name="Armstrong J."/>
            <person name="Forsburg S.L."/>
            <person name="Cerutti L."/>
            <person name="Lowe T."/>
            <person name="McCombie W.R."/>
            <person name="Paulsen I."/>
            <person name="Potashkin J."/>
            <person name="Shpakovski G.V."/>
            <person name="Ussery D."/>
            <person name="Barrell B.G."/>
            <person name="Nurse P."/>
        </authorList>
    </citation>
    <scope>NUCLEOTIDE SEQUENCE [LARGE SCALE GENOMIC DNA]</scope>
    <source>
        <strain>972 / ATCC 24843</strain>
    </source>
</reference>
<organism>
    <name type="scientific">Schizosaccharomyces pombe (strain 972 / ATCC 24843)</name>
    <name type="common">Fission yeast</name>
    <dbReference type="NCBI Taxonomy" id="284812"/>
    <lineage>
        <taxon>Eukaryota</taxon>
        <taxon>Fungi</taxon>
        <taxon>Dikarya</taxon>
        <taxon>Ascomycota</taxon>
        <taxon>Taphrinomycotina</taxon>
        <taxon>Schizosaccharomycetes</taxon>
        <taxon>Schizosaccharomycetales</taxon>
        <taxon>Schizosaccharomycetaceae</taxon>
        <taxon>Schizosaccharomyces</taxon>
    </lineage>
</organism>
<name>YIL3_SCHPO</name>
<sequence>MSVLSLSDLPSRFTFSSESSSSSSILFASTLASESRLSDLSTGSIRDSDCFSFNVHELNQSDEILEIDFRFFSKKKKNEHFSKRRKLSKVLTPPTNDEIKFVNRHTGSKPQPNFYSSSESSEKELIWFQPKMRVFLQSLSNMSYLSPSKFRYTTVYSKQPNACCIV</sequence>
<protein>
    <recommendedName>
        <fullName>Uncharacterized protein C1565.03</fullName>
    </recommendedName>
</protein>
<keyword id="KW-1185">Reference proteome</keyword>